<sequence>MALENPKMHNSEISQRLGAEWKLLSEAEKRPYIDEAKRLRAQHMKEYPEYKYRP</sequence>
<protein>
    <recommendedName>
        <fullName>SRY-related protein CH32</fullName>
    </recommendedName>
</protein>
<accession>P40671</accession>
<feature type="chain" id="PRO_0000048785" description="SRY-related protein CH32">
    <location>
        <begin position="1" status="less than"/>
        <end position="54" status="greater than"/>
    </location>
</feature>
<feature type="DNA-binding region" description="HMG box" evidence="1">
    <location>
        <begin position="1" status="less than"/>
        <end position="54" status="greater than"/>
    </location>
</feature>
<feature type="non-terminal residue">
    <location>
        <position position="1"/>
    </location>
</feature>
<feature type="non-terminal residue">
    <location>
        <position position="54"/>
    </location>
</feature>
<organism>
    <name type="scientific">Gallus gallus</name>
    <name type="common">Chicken</name>
    <dbReference type="NCBI Taxonomy" id="9031"/>
    <lineage>
        <taxon>Eukaryota</taxon>
        <taxon>Metazoa</taxon>
        <taxon>Chordata</taxon>
        <taxon>Craniata</taxon>
        <taxon>Vertebrata</taxon>
        <taxon>Euteleostomi</taxon>
        <taxon>Archelosauria</taxon>
        <taxon>Archosauria</taxon>
        <taxon>Dinosauria</taxon>
        <taxon>Saurischia</taxon>
        <taxon>Theropoda</taxon>
        <taxon>Coelurosauria</taxon>
        <taxon>Aves</taxon>
        <taxon>Neognathae</taxon>
        <taxon>Galloanserae</taxon>
        <taxon>Galliformes</taxon>
        <taxon>Phasianidae</taxon>
        <taxon>Phasianinae</taxon>
        <taxon>Gallus</taxon>
    </lineage>
</organism>
<reference key="1">
    <citation type="journal article" date="1993" name="PCR Methods Appl.">
        <title>PCR amplification of SRY-related gene sequences reveals evolutionary conservation of the SRY-box motif.</title>
        <authorList>
            <person name="Coriat A.M."/>
            <person name="Mueller U."/>
            <person name="Harry J.L."/>
            <person name="Uwanogho D."/>
            <person name="Sharpe P.T."/>
        </authorList>
    </citation>
    <scope>NUCLEOTIDE SEQUENCE [GENOMIC DNA]</scope>
    <source>
        <tissue>Blood</tissue>
    </source>
</reference>
<evidence type="ECO:0000255" key="1">
    <source>
        <dbReference type="PROSITE-ProRule" id="PRU00267"/>
    </source>
</evidence>
<proteinExistence type="inferred from homology"/>
<dbReference type="EMBL" id="M86324">
    <property type="protein sequence ID" value="AAA48680.1"/>
    <property type="molecule type" value="Genomic_DNA"/>
</dbReference>
<dbReference type="PIR" id="I50193">
    <property type="entry name" value="I50193"/>
</dbReference>
<dbReference type="SMR" id="P40671"/>
<dbReference type="FunCoup" id="P40671">
    <property type="interactions" value="6"/>
</dbReference>
<dbReference type="InParanoid" id="P40671"/>
<dbReference type="PhylomeDB" id="P40671"/>
<dbReference type="Proteomes" id="UP000000539">
    <property type="component" value="Unassembled WGS sequence"/>
</dbReference>
<dbReference type="GO" id="GO:0005634">
    <property type="term" value="C:nucleus"/>
    <property type="evidence" value="ECO:0007669"/>
    <property type="project" value="UniProtKB-SubCell"/>
</dbReference>
<dbReference type="GO" id="GO:0003677">
    <property type="term" value="F:DNA binding"/>
    <property type="evidence" value="ECO:0007669"/>
    <property type="project" value="UniProtKB-KW"/>
</dbReference>
<dbReference type="FunFam" id="1.10.30.10:FF:000074">
    <property type="entry name" value="SRY-related protein AMA1"/>
    <property type="match status" value="1"/>
</dbReference>
<dbReference type="Gene3D" id="1.10.30.10">
    <property type="entry name" value="High mobility group box domain"/>
    <property type="match status" value="1"/>
</dbReference>
<dbReference type="InterPro" id="IPR009071">
    <property type="entry name" value="HMG_box_dom"/>
</dbReference>
<dbReference type="InterPro" id="IPR036910">
    <property type="entry name" value="HMG_box_dom_sf"/>
</dbReference>
<dbReference type="InterPro" id="IPR050140">
    <property type="entry name" value="SRY-related_HMG-box_TF-like"/>
</dbReference>
<dbReference type="PANTHER" id="PTHR10270:SF324">
    <property type="entry name" value="SOX DOMAIN-CONTAINING PROTEIN DICHAETE-RELATED"/>
    <property type="match status" value="1"/>
</dbReference>
<dbReference type="PANTHER" id="PTHR10270">
    <property type="entry name" value="SOX TRANSCRIPTION FACTOR"/>
    <property type="match status" value="1"/>
</dbReference>
<dbReference type="Pfam" id="PF00505">
    <property type="entry name" value="HMG_box"/>
    <property type="match status" value="1"/>
</dbReference>
<dbReference type="SMART" id="SM00398">
    <property type="entry name" value="HMG"/>
    <property type="match status" value="1"/>
</dbReference>
<dbReference type="SUPFAM" id="SSF47095">
    <property type="entry name" value="HMG-box"/>
    <property type="match status" value="1"/>
</dbReference>
<dbReference type="PROSITE" id="PS50118">
    <property type="entry name" value="HMG_BOX_2"/>
    <property type="match status" value="1"/>
</dbReference>
<name>CH32_CHICK</name>
<comment type="subcellular location">
    <subcellularLocation>
        <location evidence="1">Nucleus</location>
    </subcellularLocation>
</comment>
<keyword id="KW-0238">DNA-binding</keyword>
<keyword id="KW-0539">Nucleus</keyword>
<keyword id="KW-1185">Reference proteome</keyword>